<keyword id="KW-0106">Calcium</keyword>
<keyword id="KW-0249">Electron transport</keyword>
<keyword id="KW-0349">Heme</keyword>
<keyword id="KW-0408">Iron</keyword>
<keyword id="KW-0479">Metal-binding</keyword>
<keyword id="KW-0560">Oxidoreductase</keyword>
<keyword id="KW-0574">Periplasm</keyword>
<keyword id="KW-1185">Reference proteome</keyword>
<keyword id="KW-0732">Signal</keyword>
<keyword id="KW-0813">Transport</keyword>
<reference key="1">
    <citation type="journal article" date="2009" name="PLoS Genet.">
        <title>Organised genome dynamics in the Escherichia coli species results in highly diverse adaptive paths.</title>
        <authorList>
            <person name="Touchon M."/>
            <person name="Hoede C."/>
            <person name="Tenaillon O."/>
            <person name="Barbe V."/>
            <person name="Baeriswyl S."/>
            <person name="Bidet P."/>
            <person name="Bingen E."/>
            <person name="Bonacorsi S."/>
            <person name="Bouchier C."/>
            <person name="Bouvet O."/>
            <person name="Calteau A."/>
            <person name="Chiapello H."/>
            <person name="Clermont O."/>
            <person name="Cruveiller S."/>
            <person name="Danchin A."/>
            <person name="Diard M."/>
            <person name="Dossat C."/>
            <person name="Karoui M.E."/>
            <person name="Frapy E."/>
            <person name="Garry L."/>
            <person name="Ghigo J.M."/>
            <person name="Gilles A.M."/>
            <person name="Johnson J."/>
            <person name="Le Bouguenec C."/>
            <person name="Lescat M."/>
            <person name="Mangenot S."/>
            <person name="Martinez-Jehanne V."/>
            <person name="Matic I."/>
            <person name="Nassif X."/>
            <person name="Oztas S."/>
            <person name="Petit M.A."/>
            <person name="Pichon C."/>
            <person name="Rouy Z."/>
            <person name="Ruf C.S."/>
            <person name="Schneider D."/>
            <person name="Tourret J."/>
            <person name="Vacherie B."/>
            <person name="Vallenet D."/>
            <person name="Medigue C."/>
            <person name="Rocha E.P.C."/>
            <person name="Denamur E."/>
        </authorList>
    </citation>
    <scope>NUCLEOTIDE SEQUENCE [LARGE SCALE GENOMIC DNA]</scope>
    <source>
        <strain>S88 / ExPEC</strain>
    </source>
</reference>
<feature type="signal peptide" evidence="1">
    <location>
        <begin position="1"/>
        <end position="26"/>
    </location>
</feature>
<feature type="chain" id="PRO_1000138209" description="Cytochrome c-552">
    <location>
        <begin position="27"/>
        <end position="478"/>
    </location>
</feature>
<feature type="binding site" description="axial binding residue" evidence="1">
    <location>
        <position position="94"/>
    </location>
    <ligand>
        <name>heme c</name>
        <dbReference type="ChEBI" id="CHEBI:61717"/>
        <label>3</label>
    </ligand>
    <ligandPart>
        <name>Fe</name>
        <dbReference type="ChEBI" id="CHEBI:18248"/>
    </ligandPart>
</feature>
<feature type="binding site" description="covalent" evidence="1">
    <location>
        <position position="122"/>
    </location>
    <ligand>
        <name>heme</name>
        <dbReference type="ChEBI" id="CHEBI:30413"/>
        <label>1</label>
    </ligand>
</feature>
<feature type="binding site" description="covalent" evidence="1">
    <location>
        <position position="125"/>
    </location>
    <ligand>
        <name>heme</name>
        <dbReference type="ChEBI" id="CHEBI:30413"/>
        <label>1</label>
    </ligand>
</feature>
<feature type="binding site" description="axial binding residue" evidence="1">
    <location>
        <position position="126"/>
    </location>
    <ligand>
        <name>heme</name>
        <dbReference type="ChEBI" id="CHEBI:30413"/>
        <label>1</label>
    </ligand>
    <ligandPart>
        <name>Fe</name>
        <dbReference type="ChEBI" id="CHEBI:18248"/>
    </ligandPart>
</feature>
<feature type="binding site" description="covalent" evidence="1">
    <location>
        <position position="160"/>
    </location>
    <ligand>
        <name>heme c</name>
        <dbReference type="ChEBI" id="CHEBI:61717"/>
        <label>2</label>
    </ligand>
</feature>
<feature type="binding site" description="covalent" evidence="1">
    <location>
        <position position="163"/>
    </location>
    <ligand>
        <name>heme c</name>
        <dbReference type="ChEBI" id="CHEBI:61717"/>
        <label>2</label>
    </ligand>
</feature>
<feature type="binding site" description="axial binding residue" evidence="1">
    <location>
        <position position="164"/>
    </location>
    <ligand>
        <name>heme c</name>
        <dbReference type="ChEBI" id="CHEBI:61717"/>
        <label>2</label>
    </ligand>
    <ligandPart>
        <name>Fe</name>
        <dbReference type="ChEBI" id="CHEBI:18248"/>
    </ligandPart>
</feature>
<feature type="binding site" description="covalent" evidence="1">
    <location>
        <position position="209"/>
    </location>
    <ligand>
        <name>heme c</name>
        <dbReference type="ChEBI" id="CHEBI:61717"/>
        <label>3</label>
    </ligand>
</feature>
<feature type="binding site" description="covalent" evidence="1">
    <location>
        <position position="212"/>
    </location>
    <ligand>
        <name>heme c</name>
        <dbReference type="ChEBI" id="CHEBI:61717"/>
        <label>3</label>
    </ligand>
</feature>
<feature type="binding site" description="axial binding residue" evidence="1">
    <location>
        <position position="213"/>
    </location>
    <ligand>
        <name>heme c</name>
        <dbReference type="ChEBI" id="CHEBI:61717"/>
        <label>3</label>
    </ligand>
    <ligandPart>
        <name>Fe</name>
        <dbReference type="ChEBI" id="CHEBI:18248"/>
    </ligandPart>
</feature>
<feature type="binding site" evidence="1">
    <location>
        <position position="215"/>
    </location>
    <ligand>
        <name>Ca(2+)</name>
        <dbReference type="ChEBI" id="CHEBI:29108"/>
    </ligand>
</feature>
<feature type="binding site" evidence="1">
    <location>
        <position position="216"/>
    </location>
    <ligand>
        <name>Ca(2+)</name>
        <dbReference type="ChEBI" id="CHEBI:29108"/>
    </ligand>
</feature>
<feature type="binding site" evidence="1">
    <location>
        <position position="216"/>
    </location>
    <ligand>
        <name>substrate</name>
    </ligand>
</feature>
<feature type="binding site" evidence="1">
    <location>
        <position position="261"/>
    </location>
    <ligand>
        <name>Ca(2+)</name>
        <dbReference type="ChEBI" id="CHEBI:29108"/>
    </ligand>
</feature>
<feature type="binding site" evidence="1">
    <location>
        <position position="263"/>
    </location>
    <ligand>
        <name>Ca(2+)</name>
        <dbReference type="ChEBI" id="CHEBI:29108"/>
    </ligand>
</feature>
<feature type="binding site" evidence="1">
    <location>
        <position position="264"/>
    </location>
    <ligand>
        <name>substrate</name>
    </ligand>
</feature>
<feature type="binding site" description="axial binding residue" evidence="1">
    <location>
        <position position="275"/>
    </location>
    <ligand>
        <name>heme c</name>
        <dbReference type="ChEBI" id="CHEBI:61717"/>
        <label>5</label>
    </ligand>
    <ligandPart>
        <name>Fe</name>
        <dbReference type="ChEBI" id="CHEBI:18248"/>
    </ligandPart>
</feature>
<feature type="binding site" description="covalent" evidence="1">
    <location>
        <position position="282"/>
    </location>
    <ligand>
        <name>heme c</name>
        <dbReference type="ChEBI" id="CHEBI:61717"/>
        <label>4</label>
    </ligand>
</feature>
<feature type="binding site" description="covalent" evidence="1">
    <location>
        <position position="285"/>
    </location>
    <ligand>
        <name>heme c</name>
        <dbReference type="ChEBI" id="CHEBI:61717"/>
        <label>4</label>
    </ligand>
</feature>
<feature type="binding site" description="axial binding residue" evidence="1">
    <location>
        <position position="286"/>
    </location>
    <ligand>
        <name>heme c</name>
        <dbReference type="ChEBI" id="CHEBI:61717"/>
        <label>4</label>
    </ligand>
    <ligandPart>
        <name>Fe</name>
        <dbReference type="ChEBI" id="CHEBI:18248"/>
    </ligandPart>
</feature>
<feature type="binding site" description="axial binding residue" evidence="1">
    <location>
        <position position="301"/>
    </location>
    <ligand>
        <name>heme c</name>
        <dbReference type="ChEBI" id="CHEBI:61717"/>
        <label>2</label>
    </ligand>
    <ligandPart>
        <name>Fe</name>
        <dbReference type="ChEBI" id="CHEBI:18248"/>
    </ligandPart>
</feature>
<feature type="binding site" description="covalent" evidence="1">
    <location>
        <position position="314"/>
    </location>
    <ligand>
        <name>heme c</name>
        <dbReference type="ChEBI" id="CHEBI:61717"/>
        <label>5</label>
    </ligand>
</feature>
<feature type="binding site" description="covalent" evidence="1">
    <location>
        <position position="317"/>
    </location>
    <ligand>
        <name>heme c</name>
        <dbReference type="ChEBI" id="CHEBI:61717"/>
        <label>5</label>
    </ligand>
</feature>
<feature type="binding site" description="axial binding residue" evidence="1">
    <location>
        <position position="318"/>
    </location>
    <ligand>
        <name>heme c</name>
        <dbReference type="ChEBI" id="CHEBI:61717"/>
        <label>5</label>
    </ligand>
    <ligandPart>
        <name>Fe</name>
        <dbReference type="ChEBI" id="CHEBI:18248"/>
    </ligandPart>
</feature>
<feature type="binding site" description="axial binding residue" evidence="1">
    <location>
        <position position="393"/>
    </location>
    <ligand>
        <name>heme c</name>
        <dbReference type="ChEBI" id="CHEBI:61717"/>
        <label>4</label>
    </ligand>
    <ligandPart>
        <name>Fe</name>
        <dbReference type="ChEBI" id="CHEBI:18248"/>
    </ligandPart>
</feature>
<dbReference type="EC" id="1.7.2.2" evidence="1"/>
<dbReference type="EMBL" id="CU928161">
    <property type="protein sequence ID" value="CAR05721.1"/>
    <property type="molecule type" value="Genomic_DNA"/>
</dbReference>
<dbReference type="RefSeq" id="WP_000196879.1">
    <property type="nucleotide sequence ID" value="NC_011742.1"/>
</dbReference>
<dbReference type="SMR" id="B7MJT8"/>
<dbReference type="KEGG" id="ecz:ECS88_4563"/>
<dbReference type="HOGENOM" id="CLU_035040_1_0_6"/>
<dbReference type="UniPathway" id="UPA00653"/>
<dbReference type="Proteomes" id="UP000000747">
    <property type="component" value="Chromosome"/>
</dbReference>
<dbReference type="GO" id="GO:0030288">
    <property type="term" value="C:outer membrane-bounded periplasmic space"/>
    <property type="evidence" value="ECO:0007669"/>
    <property type="project" value="TreeGrafter"/>
</dbReference>
<dbReference type="GO" id="GO:0005509">
    <property type="term" value="F:calcium ion binding"/>
    <property type="evidence" value="ECO:0007669"/>
    <property type="project" value="UniProtKB-UniRule"/>
</dbReference>
<dbReference type="GO" id="GO:0020037">
    <property type="term" value="F:heme binding"/>
    <property type="evidence" value="ECO:0007669"/>
    <property type="project" value="InterPro"/>
</dbReference>
<dbReference type="GO" id="GO:0005506">
    <property type="term" value="F:iron ion binding"/>
    <property type="evidence" value="ECO:0007669"/>
    <property type="project" value="UniProtKB-UniRule"/>
</dbReference>
<dbReference type="GO" id="GO:0042279">
    <property type="term" value="F:nitrite reductase (cytochrome, ammonia-forming) activity"/>
    <property type="evidence" value="ECO:0007669"/>
    <property type="project" value="UniProtKB-UniRule"/>
</dbReference>
<dbReference type="GO" id="GO:0019645">
    <property type="term" value="P:anaerobic electron transport chain"/>
    <property type="evidence" value="ECO:0007669"/>
    <property type="project" value="TreeGrafter"/>
</dbReference>
<dbReference type="GO" id="GO:0042128">
    <property type="term" value="P:nitrate assimilation"/>
    <property type="evidence" value="ECO:0007669"/>
    <property type="project" value="UniProtKB-UniRule"/>
</dbReference>
<dbReference type="CDD" id="cd00548">
    <property type="entry name" value="NrfA-like"/>
    <property type="match status" value="1"/>
</dbReference>
<dbReference type="FunFam" id="1.10.1130.10:FF:000002">
    <property type="entry name" value="Cytochrome c-552"/>
    <property type="match status" value="1"/>
</dbReference>
<dbReference type="FunFam" id="1.20.140.10:FF:000014">
    <property type="entry name" value="Cytochrome c-552"/>
    <property type="match status" value="1"/>
</dbReference>
<dbReference type="Gene3D" id="1.20.140.10">
    <property type="entry name" value="Butyryl-CoA Dehydrogenase, subunit A, domain 3"/>
    <property type="match status" value="1"/>
</dbReference>
<dbReference type="Gene3D" id="1.10.1130.10">
    <property type="entry name" value="Flavocytochrome C3, Chain A"/>
    <property type="match status" value="1"/>
</dbReference>
<dbReference type="HAMAP" id="MF_01182">
    <property type="entry name" value="Cytochrom_C552"/>
    <property type="match status" value="1"/>
</dbReference>
<dbReference type="InterPro" id="IPR003321">
    <property type="entry name" value="Cyt_c552"/>
</dbReference>
<dbReference type="InterPro" id="IPR017570">
    <property type="entry name" value="Cyt_c_NO2Rdtase_formate-dep"/>
</dbReference>
<dbReference type="InterPro" id="IPR036280">
    <property type="entry name" value="Multihaem_cyt_sf"/>
</dbReference>
<dbReference type="NCBIfam" id="TIGR03152">
    <property type="entry name" value="cyto_c552_HCOOH"/>
    <property type="match status" value="1"/>
</dbReference>
<dbReference type="NCBIfam" id="NF008339">
    <property type="entry name" value="PRK11125.1"/>
    <property type="match status" value="1"/>
</dbReference>
<dbReference type="PANTHER" id="PTHR30633:SF0">
    <property type="entry name" value="CYTOCHROME C-552"/>
    <property type="match status" value="1"/>
</dbReference>
<dbReference type="PANTHER" id="PTHR30633">
    <property type="entry name" value="CYTOCHROME C-552 RESPIRATORY NITRITE REDUCTASE"/>
    <property type="match status" value="1"/>
</dbReference>
<dbReference type="Pfam" id="PF02335">
    <property type="entry name" value="Cytochrom_C552"/>
    <property type="match status" value="1"/>
</dbReference>
<dbReference type="PIRSF" id="PIRSF000243">
    <property type="entry name" value="Cyt_c552"/>
    <property type="match status" value="1"/>
</dbReference>
<dbReference type="SUPFAM" id="SSF48695">
    <property type="entry name" value="Multiheme cytochromes"/>
    <property type="match status" value="1"/>
</dbReference>
<dbReference type="PROSITE" id="PS51008">
    <property type="entry name" value="MULTIHEME_CYTC"/>
    <property type="match status" value="1"/>
</dbReference>
<gene>
    <name evidence="1" type="primary">nrfA</name>
    <name type="ordered locus">ECS88_4563</name>
</gene>
<accession>B7MJT8</accession>
<evidence type="ECO:0000255" key="1">
    <source>
        <dbReference type="HAMAP-Rule" id="MF_01182"/>
    </source>
</evidence>
<comment type="function">
    <text evidence="1">Catalyzes the reduction of nitrite to ammonia, consuming six electrons in the process.</text>
</comment>
<comment type="catalytic activity">
    <reaction evidence="1">
        <text>6 Fe(III)-[cytochrome c] + NH4(+) + 2 H2O = 6 Fe(II)-[cytochrome c] + nitrite + 8 H(+)</text>
        <dbReference type="Rhea" id="RHEA:13089"/>
        <dbReference type="Rhea" id="RHEA-COMP:10350"/>
        <dbReference type="Rhea" id="RHEA-COMP:14399"/>
        <dbReference type="ChEBI" id="CHEBI:15377"/>
        <dbReference type="ChEBI" id="CHEBI:15378"/>
        <dbReference type="ChEBI" id="CHEBI:16301"/>
        <dbReference type="ChEBI" id="CHEBI:28938"/>
        <dbReference type="ChEBI" id="CHEBI:29033"/>
        <dbReference type="ChEBI" id="CHEBI:29034"/>
        <dbReference type="EC" id="1.7.2.2"/>
    </reaction>
</comment>
<comment type="cofactor">
    <cofactor evidence="1">
        <name>Ca(2+)</name>
        <dbReference type="ChEBI" id="CHEBI:29108"/>
    </cofactor>
    <text evidence="1">Binds 1 Ca(2+) ion per monomer.</text>
</comment>
<comment type="cofactor">
    <cofactor evidence="1">
        <name>heme c</name>
        <dbReference type="ChEBI" id="CHEBI:61717"/>
    </cofactor>
    <text evidence="1">Binds 5 heme c groups covalently per monomer.</text>
</comment>
<comment type="pathway">
    <text evidence="1">Nitrogen metabolism; nitrate reduction (assimilation).</text>
</comment>
<comment type="subcellular location">
    <subcellularLocation>
        <location evidence="1">Periplasm</location>
    </subcellularLocation>
</comment>
<comment type="similarity">
    <text evidence="1">Belongs to the cytochrome c-552 family.</text>
</comment>
<name>NRFA_ECO45</name>
<proteinExistence type="inferred from homology"/>
<protein>
    <recommendedName>
        <fullName evidence="1">Cytochrome c-552</fullName>
        <ecNumber evidence="1">1.7.2.2</ecNumber>
    </recommendedName>
    <alternativeName>
        <fullName evidence="1">Ammonia-forming cytochrome c nitrite reductase</fullName>
        <shortName evidence="1">Cytochrome c nitrite reductase</shortName>
    </alternativeName>
</protein>
<organism>
    <name type="scientific">Escherichia coli O45:K1 (strain S88 / ExPEC)</name>
    <dbReference type="NCBI Taxonomy" id="585035"/>
    <lineage>
        <taxon>Bacteria</taxon>
        <taxon>Pseudomonadati</taxon>
        <taxon>Pseudomonadota</taxon>
        <taxon>Gammaproteobacteria</taxon>
        <taxon>Enterobacterales</taxon>
        <taxon>Enterobacteriaceae</taxon>
        <taxon>Escherichia</taxon>
    </lineage>
</organism>
<sequence>MTRIKINARRIFSLLIPFFFFTSVHAEQTAAPATPVTVEAKNETFAPQHPDQYLSWKATSEQSERVDALAEDPRLVILWAGYPFSRDYNKPRGHAFAVTDVRETLRTGAPKNAEDGPLPMACWSCKSPDVARLIQKDGEDGYFHGKWARGGPEIVNNLGCADCHNTASPEFAKGKPELTLSRPYAARAMEAIGKPFEKAGRFDQQSMVCGQCHVEYYFDGKNKAVKFPWDDGMKVENMEQYYDKIAFSDWTNSLSKTPMLKAQHPEYETWTAGIHGKNNVTCIDCHMPKVQNAEGKLYTDHKIGNPFDNFAQTCANCHTQDKAALQKVVAERKQSINDLKIKVEDQLVHAHFEAKAALDAGATEAEMKPIQDDIRHAQWRWDLAIASHGIHMHAPEEGLRMLGTAMDKAADARTKLARLLATKGITHEIQIPDISTKEKAQQAIGLNMEQIKAEKQDFIKTVIPQWEEQARKNGLLSQ</sequence>